<reference key="1">
    <citation type="journal article" date="1994" name="Yeast">
        <title>The sequence of a 32,420 bp segment located on the right arm of chromosome II from Saccharomyces cerevisiae.</title>
        <authorList>
            <person name="Holmstroem K."/>
            <person name="Brandt T."/>
            <person name="Kallesoe T."/>
        </authorList>
    </citation>
    <scope>NUCLEOTIDE SEQUENCE [GENOMIC DNA]</scope>
    <source>
        <strain>ATCC 204508 / S288c</strain>
    </source>
</reference>
<reference key="2">
    <citation type="journal article" date="1994" name="EMBO J.">
        <title>Complete DNA sequence of yeast chromosome II.</title>
        <authorList>
            <person name="Feldmann H."/>
            <person name="Aigle M."/>
            <person name="Aljinovic G."/>
            <person name="Andre B."/>
            <person name="Baclet M.C."/>
            <person name="Barthe C."/>
            <person name="Baur A."/>
            <person name="Becam A.-M."/>
            <person name="Biteau N."/>
            <person name="Boles E."/>
            <person name="Brandt T."/>
            <person name="Brendel M."/>
            <person name="Brueckner M."/>
            <person name="Bussereau F."/>
            <person name="Christiansen C."/>
            <person name="Contreras R."/>
            <person name="Crouzet M."/>
            <person name="Cziepluch C."/>
            <person name="Demolis N."/>
            <person name="Delaveau T."/>
            <person name="Doignon F."/>
            <person name="Domdey H."/>
            <person name="Duesterhus S."/>
            <person name="Dubois E."/>
            <person name="Dujon B."/>
            <person name="El Bakkoury M."/>
            <person name="Entian K.-D."/>
            <person name="Feuermann M."/>
            <person name="Fiers W."/>
            <person name="Fobo G.M."/>
            <person name="Fritz C."/>
            <person name="Gassenhuber J."/>
            <person name="Glansdorff N."/>
            <person name="Goffeau A."/>
            <person name="Grivell L.A."/>
            <person name="de Haan M."/>
            <person name="Hein C."/>
            <person name="Herbert C.J."/>
            <person name="Hollenberg C.P."/>
            <person name="Holmstroem K."/>
            <person name="Jacq C."/>
            <person name="Jacquet M."/>
            <person name="Jauniaux J.-C."/>
            <person name="Jonniaux J.-L."/>
            <person name="Kallesoee T."/>
            <person name="Kiesau P."/>
            <person name="Kirchrath L."/>
            <person name="Koetter P."/>
            <person name="Korol S."/>
            <person name="Liebl S."/>
            <person name="Logghe M."/>
            <person name="Lohan A.J.E."/>
            <person name="Louis E.J."/>
            <person name="Li Z.Y."/>
            <person name="Maat M.J."/>
            <person name="Mallet L."/>
            <person name="Mannhaupt G."/>
            <person name="Messenguy F."/>
            <person name="Miosga T."/>
            <person name="Molemans F."/>
            <person name="Mueller S."/>
            <person name="Nasr F."/>
            <person name="Obermaier B."/>
            <person name="Perea J."/>
            <person name="Pierard A."/>
            <person name="Piravandi E."/>
            <person name="Pohl F.M."/>
            <person name="Pohl T.M."/>
            <person name="Potier S."/>
            <person name="Proft M."/>
            <person name="Purnelle B."/>
            <person name="Ramezani Rad M."/>
            <person name="Rieger M."/>
            <person name="Rose M."/>
            <person name="Schaaff-Gerstenschlaeger I."/>
            <person name="Scherens B."/>
            <person name="Schwarzlose C."/>
            <person name="Skala J."/>
            <person name="Slonimski P.P."/>
            <person name="Smits P.H.M."/>
            <person name="Souciet J.-L."/>
            <person name="Steensma H.Y."/>
            <person name="Stucka R."/>
            <person name="Urrestarazu L.A."/>
            <person name="van der Aart Q.J.M."/>
            <person name="Van Dyck L."/>
            <person name="Vassarotti A."/>
            <person name="Vetter I."/>
            <person name="Vierendeels F."/>
            <person name="Vissers S."/>
            <person name="Wagner G."/>
            <person name="de Wergifosse P."/>
            <person name="Wolfe K.H."/>
            <person name="Zagulski M."/>
            <person name="Zimmermann F.K."/>
            <person name="Mewes H.-W."/>
            <person name="Kleine K."/>
        </authorList>
    </citation>
    <scope>NUCLEOTIDE SEQUENCE [LARGE SCALE GENOMIC DNA]</scope>
    <source>
        <strain>ATCC 204508 / S288c</strain>
    </source>
</reference>
<reference key="3">
    <citation type="journal article" date="2014" name="G3 (Bethesda)">
        <title>The reference genome sequence of Saccharomyces cerevisiae: Then and now.</title>
        <authorList>
            <person name="Engel S.R."/>
            <person name="Dietrich F.S."/>
            <person name="Fisk D.G."/>
            <person name="Binkley G."/>
            <person name="Balakrishnan R."/>
            <person name="Costanzo M.C."/>
            <person name="Dwight S.S."/>
            <person name="Hitz B.C."/>
            <person name="Karra K."/>
            <person name="Nash R.S."/>
            <person name="Weng S."/>
            <person name="Wong E.D."/>
            <person name="Lloyd P."/>
            <person name="Skrzypek M.S."/>
            <person name="Miyasato S.R."/>
            <person name="Simison M."/>
            <person name="Cherry J.M."/>
        </authorList>
    </citation>
    <scope>GENOME REANNOTATION</scope>
    <scope>SEQUENCE REVISION TO 55</scope>
    <source>
        <strain>ATCC 204508 / S288c</strain>
    </source>
</reference>
<reference key="4">
    <citation type="journal article" date="2007" name="Genome Res.">
        <title>Approaching a complete repository of sequence-verified protein-encoding clones for Saccharomyces cerevisiae.</title>
        <authorList>
            <person name="Hu Y."/>
            <person name="Rolfs A."/>
            <person name="Bhullar B."/>
            <person name="Murthy T.V.S."/>
            <person name="Zhu C."/>
            <person name="Berger M.F."/>
            <person name="Camargo A.A."/>
            <person name="Kelley F."/>
            <person name="McCarron S."/>
            <person name="Jepson D."/>
            <person name="Richardson A."/>
            <person name="Raphael J."/>
            <person name="Moreira D."/>
            <person name="Taycher E."/>
            <person name="Zuo D."/>
            <person name="Mohr S."/>
            <person name="Kane M.F."/>
            <person name="Williamson J."/>
            <person name="Simpson A.J.G."/>
            <person name="Bulyk M.L."/>
            <person name="Harlow E."/>
            <person name="Marsischky G."/>
            <person name="Kolodner R.D."/>
            <person name="LaBaer J."/>
        </authorList>
    </citation>
    <scope>NUCLEOTIDE SEQUENCE [GENOMIC DNA]</scope>
    <source>
        <strain>ATCC 204508 / S288c</strain>
    </source>
</reference>
<proteinExistence type="predicted"/>
<name>YB8A_YEAST</name>
<protein>
    <recommendedName>
        <fullName>Putative uncharacterized protein YBR285W</fullName>
    </recommendedName>
</protein>
<feature type="chain" id="PRO_0000202534" description="Putative uncharacterized protein YBR285W">
    <location>
        <begin position="1"/>
        <end position="144"/>
    </location>
</feature>
<feature type="sequence conflict" description="In Ref. 1; CAA53648 and 2; CAA85249/CAA85250." evidence="1" ref="1 2">
    <original>D</original>
    <variation>H</variation>
    <location>
        <position position="55"/>
    </location>
</feature>
<evidence type="ECO:0000305" key="1"/>
<organism>
    <name type="scientific">Saccharomyces cerevisiae (strain ATCC 204508 / S288c)</name>
    <name type="common">Baker's yeast</name>
    <dbReference type="NCBI Taxonomy" id="559292"/>
    <lineage>
        <taxon>Eukaryota</taxon>
        <taxon>Fungi</taxon>
        <taxon>Dikarya</taxon>
        <taxon>Ascomycota</taxon>
        <taxon>Saccharomycotina</taxon>
        <taxon>Saccharomycetes</taxon>
        <taxon>Saccharomycetales</taxon>
        <taxon>Saccharomycetaceae</taxon>
        <taxon>Saccharomyces</taxon>
    </lineage>
</organism>
<dbReference type="EMBL" id="X76053">
    <property type="protein sequence ID" value="CAA53648.1"/>
    <property type="molecule type" value="Genomic_DNA"/>
</dbReference>
<dbReference type="EMBL" id="Z36154">
    <property type="protein sequence ID" value="CAA85249.1"/>
    <property type="molecule type" value="Genomic_DNA"/>
</dbReference>
<dbReference type="EMBL" id="Z36155">
    <property type="protein sequence ID" value="CAA85250.1"/>
    <property type="molecule type" value="Genomic_DNA"/>
</dbReference>
<dbReference type="EMBL" id="AY692586">
    <property type="protein sequence ID" value="AAT92605.1"/>
    <property type="molecule type" value="Genomic_DNA"/>
</dbReference>
<dbReference type="EMBL" id="BK006936">
    <property type="protein sequence ID" value="DAA07400.2"/>
    <property type="molecule type" value="Genomic_DNA"/>
</dbReference>
<dbReference type="PIR" id="S44547">
    <property type="entry name" value="S44547"/>
</dbReference>
<dbReference type="BioGRID" id="32979">
    <property type="interactions" value="145"/>
</dbReference>
<dbReference type="DIP" id="DIP-4964N"/>
<dbReference type="FunCoup" id="P38354">
    <property type="interactions" value="48"/>
</dbReference>
<dbReference type="IntAct" id="P38354">
    <property type="interactions" value="2"/>
</dbReference>
<dbReference type="STRING" id="4932.YBR285W"/>
<dbReference type="iPTMnet" id="P38354"/>
<dbReference type="PaxDb" id="4932-YBR285W"/>
<dbReference type="PeptideAtlas" id="P38354"/>
<dbReference type="EnsemblFungi" id="YBR285W_mRNA">
    <property type="protein sequence ID" value="YBR285W"/>
    <property type="gene ID" value="YBR285W"/>
</dbReference>
<dbReference type="KEGG" id="sce:YBR285W"/>
<dbReference type="AGR" id="SGD:S000000489"/>
<dbReference type="SGD" id="S000000489">
    <property type="gene designation" value="YBR285W"/>
</dbReference>
<dbReference type="VEuPathDB" id="FungiDB:YBR285W"/>
<dbReference type="HOGENOM" id="CLU_1797565_0_0_1"/>
<dbReference type="InParanoid" id="P38354"/>
<dbReference type="OrthoDB" id="4040705at2759"/>
<dbReference type="BioCyc" id="YEAST:G3O-29205-MONOMER"/>
<dbReference type="BioGRID-ORCS" id="852588">
    <property type="hits" value="0 hits in 10 CRISPR screens"/>
</dbReference>
<dbReference type="PRO" id="PR:P38354"/>
<dbReference type="Proteomes" id="UP000002311">
    <property type="component" value="Chromosome II"/>
</dbReference>
<dbReference type="RNAct" id="P38354">
    <property type="molecule type" value="protein"/>
</dbReference>
<dbReference type="GO" id="GO:0005776">
    <property type="term" value="C:autophagosome"/>
    <property type="evidence" value="ECO:0000314"/>
    <property type="project" value="SGD"/>
</dbReference>
<dbReference type="GO" id="GO:0043022">
    <property type="term" value="F:ribosome binding"/>
    <property type="evidence" value="ECO:0000315"/>
    <property type="project" value="SGD"/>
</dbReference>
<dbReference type="GO" id="GO:0006914">
    <property type="term" value="P:autophagy"/>
    <property type="evidence" value="ECO:0000315"/>
    <property type="project" value="SGD"/>
</dbReference>
<sequence>MTIFSRFSYFDSLFSFKKQEPSPIEIIYCNENNGFINIKSLESPTDDSMEADISDREMATILTRNRNNLGKVAIDKKGVNNHCIDLNELKKGLVANEHKLDNDNSTRHQNTYSPEDSVEFDRFDDKQSRILKCSTRRSYLRYKK</sequence>
<gene>
    <name type="ordered locus">YBR285W</name>
    <name type="ORF">YBR2023</name>
</gene>
<keyword id="KW-1185">Reference proteome</keyword>
<accession>P38354</accession>
<accession>D6VQT0</accession>
<accession>P89508</accession>
<accession>Q6B2Z4</accession>